<organism>
    <name type="scientific">Allorhizobium ampelinum (strain ATCC BAA-846 / DSM 112012 / S4)</name>
    <name type="common">Agrobacterium vitis (strain S4)</name>
    <dbReference type="NCBI Taxonomy" id="311402"/>
    <lineage>
        <taxon>Bacteria</taxon>
        <taxon>Pseudomonadati</taxon>
        <taxon>Pseudomonadota</taxon>
        <taxon>Alphaproteobacteria</taxon>
        <taxon>Hyphomicrobiales</taxon>
        <taxon>Rhizobiaceae</taxon>
        <taxon>Rhizobium/Agrobacterium group</taxon>
        <taxon>Allorhizobium</taxon>
        <taxon>Allorhizobium ampelinum</taxon>
    </lineage>
</organism>
<keyword id="KW-0450">Lipoyl</keyword>
<keyword id="KW-1185">Reference proteome</keyword>
<accession>B9JWI3</accession>
<dbReference type="EMBL" id="CP000633">
    <property type="protein sequence ID" value="ACM36611.1"/>
    <property type="molecule type" value="Genomic_DNA"/>
</dbReference>
<dbReference type="RefSeq" id="WP_015916032.1">
    <property type="nucleotide sequence ID" value="NC_011989.1"/>
</dbReference>
<dbReference type="SMR" id="B9JWI3"/>
<dbReference type="STRING" id="311402.Avi_2253"/>
<dbReference type="KEGG" id="avi:Avi_2253"/>
<dbReference type="eggNOG" id="COG0509">
    <property type="taxonomic scope" value="Bacteria"/>
</dbReference>
<dbReference type="HOGENOM" id="CLU_097408_2_0_5"/>
<dbReference type="Proteomes" id="UP000001596">
    <property type="component" value="Chromosome 1"/>
</dbReference>
<dbReference type="GO" id="GO:0005737">
    <property type="term" value="C:cytoplasm"/>
    <property type="evidence" value="ECO:0007669"/>
    <property type="project" value="TreeGrafter"/>
</dbReference>
<dbReference type="GO" id="GO:0005960">
    <property type="term" value="C:glycine cleavage complex"/>
    <property type="evidence" value="ECO:0007669"/>
    <property type="project" value="InterPro"/>
</dbReference>
<dbReference type="GO" id="GO:0019464">
    <property type="term" value="P:glycine decarboxylation via glycine cleavage system"/>
    <property type="evidence" value="ECO:0007669"/>
    <property type="project" value="UniProtKB-UniRule"/>
</dbReference>
<dbReference type="CDD" id="cd06848">
    <property type="entry name" value="GCS_H"/>
    <property type="match status" value="1"/>
</dbReference>
<dbReference type="Gene3D" id="2.40.50.100">
    <property type="match status" value="1"/>
</dbReference>
<dbReference type="HAMAP" id="MF_00272">
    <property type="entry name" value="GcvH"/>
    <property type="match status" value="1"/>
</dbReference>
<dbReference type="InterPro" id="IPR003016">
    <property type="entry name" value="2-oxoA_DH_lipoyl-BS"/>
</dbReference>
<dbReference type="InterPro" id="IPR000089">
    <property type="entry name" value="Biotin_lipoyl"/>
</dbReference>
<dbReference type="InterPro" id="IPR002930">
    <property type="entry name" value="GCV_H"/>
</dbReference>
<dbReference type="InterPro" id="IPR033753">
    <property type="entry name" value="GCV_H/Fam206"/>
</dbReference>
<dbReference type="InterPro" id="IPR017453">
    <property type="entry name" value="GCV_H_sub"/>
</dbReference>
<dbReference type="InterPro" id="IPR011053">
    <property type="entry name" value="Single_hybrid_motif"/>
</dbReference>
<dbReference type="NCBIfam" id="TIGR00527">
    <property type="entry name" value="gcvH"/>
    <property type="match status" value="1"/>
</dbReference>
<dbReference type="NCBIfam" id="NF002270">
    <property type="entry name" value="PRK01202.1"/>
    <property type="match status" value="1"/>
</dbReference>
<dbReference type="PANTHER" id="PTHR11715">
    <property type="entry name" value="GLYCINE CLEAVAGE SYSTEM H PROTEIN"/>
    <property type="match status" value="1"/>
</dbReference>
<dbReference type="PANTHER" id="PTHR11715:SF3">
    <property type="entry name" value="GLYCINE CLEAVAGE SYSTEM H PROTEIN-RELATED"/>
    <property type="match status" value="1"/>
</dbReference>
<dbReference type="Pfam" id="PF01597">
    <property type="entry name" value="GCV_H"/>
    <property type="match status" value="1"/>
</dbReference>
<dbReference type="SUPFAM" id="SSF51230">
    <property type="entry name" value="Single hybrid motif"/>
    <property type="match status" value="1"/>
</dbReference>
<dbReference type="PROSITE" id="PS50968">
    <property type="entry name" value="BIOTINYL_LIPOYL"/>
    <property type="match status" value="1"/>
</dbReference>
<dbReference type="PROSITE" id="PS00189">
    <property type="entry name" value="LIPOYL"/>
    <property type="match status" value="1"/>
</dbReference>
<feature type="chain" id="PRO_1000190187" description="Glycine cleavage system H protein">
    <location>
        <begin position="1"/>
        <end position="120"/>
    </location>
</feature>
<feature type="domain" description="Lipoyl-binding" evidence="2">
    <location>
        <begin position="17"/>
        <end position="99"/>
    </location>
</feature>
<feature type="modified residue" description="N6-lipoyllysine" evidence="1">
    <location>
        <position position="58"/>
    </location>
</feature>
<protein>
    <recommendedName>
        <fullName evidence="1">Glycine cleavage system H protein</fullName>
    </recommendedName>
</protein>
<comment type="function">
    <text evidence="1">The glycine cleavage system catalyzes the degradation of glycine. The H protein shuttles the methylamine group of glycine from the P protein to the T protein.</text>
</comment>
<comment type="cofactor">
    <cofactor evidence="1">
        <name>(R)-lipoate</name>
        <dbReference type="ChEBI" id="CHEBI:83088"/>
    </cofactor>
    <text evidence="1">Binds 1 lipoyl cofactor covalently.</text>
</comment>
<comment type="subunit">
    <text evidence="1">The glycine cleavage system is composed of four proteins: P, T, L and H.</text>
</comment>
<comment type="similarity">
    <text evidence="1">Belongs to the GcvH family.</text>
</comment>
<evidence type="ECO:0000255" key="1">
    <source>
        <dbReference type="HAMAP-Rule" id="MF_00272"/>
    </source>
</evidence>
<evidence type="ECO:0000255" key="2">
    <source>
        <dbReference type="PROSITE-ProRule" id="PRU01066"/>
    </source>
</evidence>
<reference key="1">
    <citation type="journal article" date="2009" name="J. Bacteriol.">
        <title>Genome sequences of three Agrobacterium biovars help elucidate the evolution of multichromosome genomes in bacteria.</title>
        <authorList>
            <person name="Slater S.C."/>
            <person name="Goldman B.S."/>
            <person name="Goodner B."/>
            <person name="Setubal J.C."/>
            <person name="Farrand S.K."/>
            <person name="Nester E.W."/>
            <person name="Burr T.J."/>
            <person name="Banta L."/>
            <person name="Dickerman A.W."/>
            <person name="Paulsen I."/>
            <person name="Otten L."/>
            <person name="Suen G."/>
            <person name="Welch R."/>
            <person name="Almeida N.F."/>
            <person name="Arnold F."/>
            <person name="Burton O.T."/>
            <person name="Du Z."/>
            <person name="Ewing A."/>
            <person name="Godsy E."/>
            <person name="Heisel S."/>
            <person name="Houmiel K.L."/>
            <person name="Jhaveri J."/>
            <person name="Lu J."/>
            <person name="Miller N.M."/>
            <person name="Norton S."/>
            <person name="Chen Q."/>
            <person name="Phoolcharoen W."/>
            <person name="Ohlin V."/>
            <person name="Ondrusek D."/>
            <person name="Pride N."/>
            <person name="Stricklin S.L."/>
            <person name="Sun J."/>
            <person name="Wheeler C."/>
            <person name="Wilson L."/>
            <person name="Zhu H."/>
            <person name="Wood D.W."/>
        </authorList>
    </citation>
    <scope>NUCLEOTIDE SEQUENCE [LARGE SCALE GENOMIC DNA]</scope>
    <source>
        <strain>ATCC BAA-846 / DSM 112012 / S4</strain>
    </source>
</reference>
<sequence length="120" mass="12775">MLKFTSEHEWLQIEGDIATVGITAHAAEQLGDLVFVELPEVGATFAKDGQAATVESVKAASDVYCPLDGEVTEINQAIVDDPSLVNSDPRGAGWFFKLKLANPADAEGLLNEAAYNELIA</sequence>
<name>GCSH_ALLAM</name>
<proteinExistence type="inferred from homology"/>
<gene>
    <name evidence="1" type="primary">gcvH</name>
    <name type="ordered locus">Avi_2253</name>
</gene>